<proteinExistence type="evidence at transcript level"/>
<name>T23O_BOVIN</name>
<evidence type="ECO:0000250" key="1">
    <source>
        <dbReference type="UniProtKB" id="P21643"/>
    </source>
</evidence>
<evidence type="ECO:0000255" key="2">
    <source>
        <dbReference type="HAMAP-Rule" id="MF_03020"/>
    </source>
</evidence>
<comment type="function">
    <text evidence="2">Heme-dependent dioxygenase that catalyzes the oxidative cleavage of the L-tryptophan (L-Trp) pyrrole ring and converts L-tryptophan to N-formyl-L-kynurenine. Catalyzes the oxidative cleavage of the indole moiety.</text>
</comment>
<comment type="catalytic activity">
    <reaction evidence="2">
        <text>L-tryptophan + O2 = N-formyl-L-kynurenine</text>
        <dbReference type="Rhea" id="RHEA:24536"/>
        <dbReference type="ChEBI" id="CHEBI:15379"/>
        <dbReference type="ChEBI" id="CHEBI:57912"/>
        <dbReference type="ChEBI" id="CHEBI:58629"/>
        <dbReference type="EC" id="1.13.11.11"/>
    </reaction>
</comment>
<comment type="cofactor">
    <cofactor evidence="2">
        <name>heme</name>
        <dbReference type="ChEBI" id="CHEBI:30413"/>
    </cofactor>
    <text evidence="2">Binds 1 heme group per subunit.</text>
</comment>
<comment type="pathway">
    <text evidence="2">Amino-acid degradation; L-tryptophan degradation via kynurenine pathway; L-kynurenine from L-tryptophan: step 1/2.</text>
</comment>
<comment type="subunit">
    <text evidence="2">Homotetramer. Dimer of dimers.</text>
</comment>
<comment type="similarity">
    <text evidence="2">Belongs to the tryptophan 2,3-dioxygenase family.</text>
</comment>
<accession>Q2KIQ5</accession>
<organism>
    <name type="scientific">Bos taurus</name>
    <name type="common">Bovine</name>
    <dbReference type="NCBI Taxonomy" id="9913"/>
    <lineage>
        <taxon>Eukaryota</taxon>
        <taxon>Metazoa</taxon>
        <taxon>Chordata</taxon>
        <taxon>Craniata</taxon>
        <taxon>Vertebrata</taxon>
        <taxon>Euteleostomi</taxon>
        <taxon>Mammalia</taxon>
        <taxon>Eutheria</taxon>
        <taxon>Laurasiatheria</taxon>
        <taxon>Artiodactyla</taxon>
        <taxon>Ruminantia</taxon>
        <taxon>Pecora</taxon>
        <taxon>Bovidae</taxon>
        <taxon>Bovinae</taxon>
        <taxon>Bos</taxon>
    </lineage>
</organism>
<protein>
    <recommendedName>
        <fullName evidence="2">Tryptophan 2,3-dioxygenase</fullName>
        <shortName evidence="2">TDO</shortName>
        <ecNumber evidence="2">1.13.11.11</ecNumber>
    </recommendedName>
    <alternativeName>
        <fullName evidence="2">Tryptamin 2,3-dioxygenase</fullName>
    </alternativeName>
    <alternativeName>
        <fullName evidence="2">Tryptophan oxygenase</fullName>
        <shortName evidence="2">TO</shortName>
        <shortName evidence="2">TRPO</shortName>
    </alternativeName>
    <alternativeName>
        <fullName evidence="2">Tryptophan pyrrolase</fullName>
    </alternativeName>
    <alternativeName>
        <fullName evidence="2">Tryptophanase</fullName>
    </alternativeName>
</protein>
<keyword id="KW-0223">Dioxygenase</keyword>
<keyword id="KW-0349">Heme</keyword>
<keyword id="KW-0408">Iron</keyword>
<keyword id="KW-0479">Metal-binding</keyword>
<keyword id="KW-0560">Oxidoreductase</keyword>
<keyword id="KW-0597">Phosphoprotein</keyword>
<keyword id="KW-1185">Reference proteome</keyword>
<keyword id="KW-0823">Tryptophan catabolism</keyword>
<feature type="chain" id="PRO_0000247474" description="Tryptophan 2,3-dioxygenase">
    <location>
        <begin position="1"/>
        <end position="406"/>
    </location>
</feature>
<feature type="binding site" evidence="2">
    <location>
        <begin position="72"/>
        <end position="76"/>
    </location>
    <ligand>
        <name>substrate</name>
    </ligand>
</feature>
<feature type="binding site" evidence="2">
    <location>
        <position position="144"/>
    </location>
    <ligand>
        <name>substrate</name>
    </ligand>
</feature>
<feature type="binding site" description="axial binding residue" evidence="2">
    <location>
        <position position="328"/>
    </location>
    <ligand>
        <name>heme</name>
        <dbReference type="ChEBI" id="CHEBI:30413"/>
    </ligand>
    <ligandPart>
        <name>Fe</name>
        <dbReference type="ChEBI" id="CHEBI:18248"/>
    </ligandPart>
</feature>
<feature type="binding site" evidence="2">
    <location>
        <position position="342"/>
    </location>
    <ligand>
        <name>substrate</name>
    </ligand>
</feature>
<feature type="modified residue" description="Phosphoserine" evidence="1">
    <location>
        <position position="19"/>
    </location>
</feature>
<sequence length="406" mass="47708">MSGCPFLGKSFGYAFKPLSAQGSEEDKSQAGVNRASKGGLIYGNYLQLEKVLNAQELQSEMKGNKIHDEHLFIITHQAYELWFKQILWELDSVREIFQNGHVRDERNMLKVITRMHRVVVILKLLVQQFSVLETMTALDFNDFREYLSPASGFQSLQFRLLENKIGVLQSLRVPYNRRHYRDNFRGKDNELLLKSEQERTLLQLVEAWLERTPGLEPHGFNFWGKLEKNIVKGLEEEFTKIQAKEESEEKEEQMAEFQKQKEVLLSLFDEKRHEHLLSKGERRLSYKALQGALMIYFYREEPRFQVPFQLLTFLMDVDSLMTKWRYNHVCLVHRMLGSKAGTGGSSGYQYLRSTVSDRYKVFVDLFNLSTYLVPRHWIPKMNPVIHKFLYTAEYCDSSYFSSDESD</sequence>
<dbReference type="EC" id="1.13.11.11" evidence="2"/>
<dbReference type="EMBL" id="BC112550">
    <property type="protein sequence ID" value="AAI12551.1"/>
    <property type="molecule type" value="mRNA"/>
</dbReference>
<dbReference type="RefSeq" id="NP_001039778.1">
    <property type="nucleotide sequence ID" value="NM_001046313.1"/>
</dbReference>
<dbReference type="SMR" id="Q2KIQ5"/>
<dbReference type="FunCoup" id="Q2KIQ5">
    <property type="interactions" value="254"/>
</dbReference>
<dbReference type="STRING" id="9913.ENSBTAP00000066847"/>
<dbReference type="PaxDb" id="9913-ENSBTAP00000014690"/>
<dbReference type="Ensembl" id="ENSBTAT00000014690.5">
    <property type="protein sequence ID" value="ENSBTAP00000014690.3"/>
    <property type="gene ID" value="ENSBTAG00000011062.5"/>
</dbReference>
<dbReference type="GeneID" id="530397"/>
<dbReference type="KEGG" id="bta:530397"/>
<dbReference type="CTD" id="6999"/>
<dbReference type="VEuPathDB" id="HostDB:ENSBTAG00000011062"/>
<dbReference type="VGNC" id="VGNC:35712">
    <property type="gene designation" value="TDO2"/>
</dbReference>
<dbReference type="eggNOG" id="KOG3906">
    <property type="taxonomic scope" value="Eukaryota"/>
</dbReference>
<dbReference type="GeneTree" id="ENSGT00390000008593"/>
<dbReference type="HOGENOM" id="CLU_045599_1_1_1"/>
<dbReference type="InParanoid" id="Q2KIQ5"/>
<dbReference type="OMA" id="WRWRNDH"/>
<dbReference type="OrthoDB" id="447477at2759"/>
<dbReference type="TreeFam" id="TF105827"/>
<dbReference type="Reactome" id="R-BTA-71240">
    <property type="pathway name" value="Tryptophan catabolism"/>
</dbReference>
<dbReference type="UniPathway" id="UPA00333">
    <property type="reaction ID" value="UER00453"/>
</dbReference>
<dbReference type="Proteomes" id="UP000009136">
    <property type="component" value="Chromosome 17"/>
</dbReference>
<dbReference type="Bgee" id="ENSBTAG00000011062">
    <property type="expression patterns" value="Expressed in liver and 22 other cell types or tissues"/>
</dbReference>
<dbReference type="GO" id="GO:0020037">
    <property type="term" value="F:heme binding"/>
    <property type="evidence" value="ECO:0000250"/>
    <property type="project" value="UniProtKB"/>
</dbReference>
<dbReference type="GO" id="GO:0042802">
    <property type="term" value="F:identical protein binding"/>
    <property type="evidence" value="ECO:0007669"/>
    <property type="project" value="Ensembl"/>
</dbReference>
<dbReference type="GO" id="GO:0046872">
    <property type="term" value="F:metal ion binding"/>
    <property type="evidence" value="ECO:0007669"/>
    <property type="project" value="UniProtKB-KW"/>
</dbReference>
<dbReference type="GO" id="GO:0004833">
    <property type="term" value="F:tryptophan 2,3-dioxygenase activity"/>
    <property type="evidence" value="ECO:0000250"/>
    <property type="project" value="UniProtKB"/>
</dbReference>
<dbReference type="GO" id="GO:0019442">
    <property type="term" value="P:L-tryptophan catabolic process to acetyl-CoA"/>
    <property type="evidence" value="ECO:0000318"/>
    <property type="project" value="GO_Central"/>
</dbReference>
<dbReference type="GO" id="GO:0019441">
    <property type="term" value="P:L-tryptophan catabolic process to kynurenine"/>
    <property type="evidence" value="ECO:0000250"/>
    <property type="project" value="UniProtKB"/>
</dbReference>
<dbReference type="GO" id="GO:0051289">
    <property type="term" value="P:protein homotetramerization"/>
    <property type="evidence" value="ECO:0000250"/>
    <property type="project" value="UniProtKB"/>
</dbReference>
<dbReference type="FunFam" id="1.10.287.3810:FF:000001">
    <property type="entry name" value="Tryptophan 2,3-dioxygenase"/>
    <property type="match status" value="1"/>
</dbReference>
<dbReference type="Gene3D" id="1.10.287.3810">
    <property type="match status" value="1"/>
</dbReference>
<dbReference type="Gene3D" id="1.20.58.480">
    <property type="match status" value="1"/>
</dbReference>
<dbReference type="HAMAP" id="MF_01972">
    <property type="entry name" value="T23O"/>
    <property type="match status" value="1"/>
</dbReference>
<dbReference type="InterPro" id="IPR037217">
    <property type="entry name" value="Trp/Indoleamine_2_3_dOase-like"/>
</dbReference>
<dbReference type="InterPro" id="IPR004981">
    <property type="entry name" value="Trp_2_3_dOase"/>
</dbReference>
<dbReference type="PANTHER" id="PTHR10138">
    <property type="entry name" value="TRYPTOPHAN 2,3-DIOXYGENASE"/>
    <property type="match status" value="1"/>
</dbReference>
<dbReference type="PANTHER" id="PTHR10138:SF0">
    <property type="entry name" value="TRYPTOPHAN 2,3-DIOXYGENASE"/>
    <property type="match status" value="1"/>
</dbReference>
<dbReference type="Pfam" id="PF03301">
    <property type="entry name" value="Trp_dioxygenase"/>
    <property type="match status" value="1"/>
</dbReference>
<dbReference type="SUPFAM" id="SSF140959">
    <property type="entry name" value="Indolic compounds 2,3-dioxygenase-like"/>
    <property type="match status" value="1"/>
</dbReference>
<gene>
    <name evidence="2" type="primary">TDO2</name>
</gene>
<reference key="1">
    <citation type="submission" date="2006-01" db="EMBL/GenBank/DDBJ databases">
        <authorList>
            <consortium name="NIH - Mammalian Gene Collection (MGC) project"/>
        </authorList>
    </citation>
    <scope>NUCLEOTIDE SEQUENCE [LARGE SCALE MRNA]</scope>
    <source>
        <strain>Hereford</strain>
        <tissue>Testis</tissue>
    </source>
</reference>